<proteinExistence type="inferred from homology"/>
<evidence type="ECO:0000255" key="1">
    <source>
        <dbReference type="HAMAP-Rule" id="MF_00101"/>
    </source>
</evidence>
<sequence length="121" mass="13883">MQVGIDIIEISRIKRAYERYNRLFLKRILTESEIEWCLNKPRPFESVAVRFACKEAFAKAMGTGISGELSWQSIEILNDKEGKPTLFLKQPFNGLKSEQVKLSLSHTHEYAVAVVIIEPDK</sequence>
<dbReference type="EC" id="2.7.8.7" evidence="1"/>
<dbReference type="EMBL" id="CP001100">
    <property type="protein sequence ID" value="ACF12725.1"/>
    <property type="molecule type" value="Genomic_DNA"/>
</dbReference>
<dbReference type="RefSeq" id="WP_012498809.1">
    <property type="nucleotide sequence ID" value="NC_011026.1"/>
</dbReference>
<dbReference type="SMR" id="B3QTH9"/>
<dbReference type="STRING" id="517418.Ctha_0254"/>
<dbReference type="KEGG" id="cts:Ctha_0254"/>
<dbReference type="eggNOG" id="COG0736">
    <property type="taxonomic scope" value="Bacteria"/>
</dbReference>
<dbReference type="HOGENOM" id="CLU_089696_0_2_10"/>
<dbReference type="OrthoDB" id="517356at2"/>
<dbReference type="Proteomes" id="UP000001208">
    <property type="component" value="Chromosome"/>
</dbReference>
<dbReference type="GO" id="GO:0005737">
    <property type="term" value="C:cytoplasm"/>
    <property type="evidence" value="ECO:0007669"/>
    <property type="project" value="UniProtKB-SubCell"/>
</dbReference>
<dbReference type="GO" id="GO:0008897">
    <property type="term" value="F:holo-[acyl-carrier-protein] synthase activity"/>
    <property type="evidence" value="ECO:0007669"/>
    <property type="project" value="UniProtKB-UniRule"/>
</dbReference>
<dbReference type="GO" id="GO:0000287">
    <property type="term" value="F:magnesium ion binding"/>
    <property type="evidence" value="ECO:0007669"/>
    <property type="project" value="UniProtKB-UniRule"/>
</dbReference>
<dbReference type="GO" id="GO:0006633">
    <property type="term" value="P:fatty acid biosynthetic process"/>
    <property type="evidence" value="ECO:0007669"/>
    <property type="project" value="UniProtKB-UniRule"/>
</dbReference>
<dbReference type="Gene3D" id="3.90.470.20">
    <property type="entry name" value="4'-phosphopantetheinyl transferase domain"/>
    <property type="match status" value="1"/>
</dbReference>
<dbReference type="HAMAP" id="MF_00101">
    <property type="entry name" value="AcpS"/>
    <property type="match status" value="1"/>
</dbReference>
<dbReference type="InterPro" id="IPR008278">
    <property type="entry name" value="4-PPantetheinyl_Trfase_dom"/>
</dbReference>
<dbReference type="InterPro" id="IPR037143">
    <property type="entry name" value="4-PPantetheinyl_Trfase_dom_sf"/>
</dbReference>
<dbReference type="InterPro" id="IPR002582">
    <property type="entry name" value="ACPS"/>
</dbReference>
<dbReference type="InterPro" id="IPR004568">
    <property type="entry name" value="Ppantetheine-prot_Trfase_dom"/>
</dbReference>
<dbReference type="NCBIfam" id="TIGR00516">
    <property type="entry name" value="acpS"/>
    <property type="match status" value="1"/>
</dbReference>
<dbReference type="NCBIfam" id="TIGR00556">
    <property type="entry name" value="pantethn_trn"/>
    <property type="match status" value="1"/>
</dbReference>
<dbReference type="Pfam" id="PF01648">
    <property type="entry name" value="ACPS"/>
    <property type="match status" value="1"/>
</dbReference>
<dbReference type="SUPFAM" id="SSF56214">
    <property type="entry name" value="4'-phosphopantetheinyl transferase"/>
    <property type="match status" value="1"/>
</dbReference>
<keyword id="KW-0963">Cytoplasm</keyword>
<keyword id="KW-0275">Fatty acid biosynthesis</keyword>
<keyword id="KW-0276">Fatty acid metabolism</keyword>
<keyword id="KW-0444">Lipid biosynthesis</keyword>
<keyword id="KW-0443">Lipid metabolism</keyword>
<keyword id="KW-0460">Magnesium</keyword>
<keyword id="KW-0479">Metal-binding</keyword>
<keyword id="KW-1185">Reference proteome</keyword>
<keyword id="KW-0808">Transferase</keyword>
<protein>
    <recommendedName>
        <fullName evidence="1">Holo-[acyl-carrier-protein] synthase</fullName>
        <shortName evidence="1">Holo-ACP synthase</shortName>
        <ecNumber evidence="1">2.7.8.7</ecNumber>
    </recommendedName>
    <alternativeName>
        <fullName evidence="1">4'-phosphopantetheinyl transferase AcpS</fullName>
    </alternativeName>
</protein>
<name>ACPS_CHLT3</name>
<gene>
    <name evidence="1" type="primary">acpS</name>
    <name type="ordered locus">Ctha_0254</name>
</gene>
<organism>
    <name type="scientific">Chloroherpeton thalassium (strain ATCC 35110 / GB-78)</name>
    <dbReference type="NCBI Taxonomy" id="517418"/>
    <lineage>
        <taxon>Bacteria</taxon>
        <taxon>Pseudomonadati</taxon>
        <taxon>Chlorobiota</taxon>
        <taxon>Chlorobiia</taxon>
        <taxon>Chlorobiales</taxon>
        <taxon>Chloroherpetonaceae</taxon>
        <taxon>Chloroherpeton</taxon>
    </lineage>
</organism>
<feature type="chain" id="PRO_1000093867" description="Holo-[acyl-carrier-protein] synthase">
    <location>
        <begin position="1"/>
        <end position="121"/>
    </location>
</feature>
<feature type="binding site" evidence="1">
    <location>
        <position position="6"/>
    </location>
    <ligand>
        <name>Mg(2+)</name>
        <dbReference type="ChEBI" id="CHEBI:18420"/>
    </ligand>
</feature>
<feature type="binding site" evidence="1">
    <location>
        <position position="55"/>
    </location>
    <ligand>
        <name>Mg(2+)</name>
        <dbReference type="ChEBI" id="CHEBI:18420"/>
    </ligand>
</feature>
<comment type="function">
    <text evidence="1">Transfers the 4'-phosphopantetheine moiety from coenzyme A to a Ser of acyl-carrier-protein.</text>
</comment>
<comment type="catalytic activity">
    <reaction evidence="1">
        <text>apo-[ACP] + CoA = holo-[ACP] + adenosine 3',5'-bisphosphate + H(+)</text>
        <dbReference type="Rhea" id="RHEA:12068"/>
        <dbReference type="Rhea" id="RHEA-COMP:9685"/>
        <dbReference type="Rhea" id="RHEA-COMP:9690"/>
        <dbReference type="ChEBI" id="CHEBI:15378"/>
        <dbReference type="ChEBI" id="CHEBI:29999"/>
        <dbReference type="ChEBI" id="CHEBI:57287"/>
        <dbReference type="ChEBI" id="CHEBI:58343"/>
        <dbReference type="ChEBI" id="CHEBI:64479"/>
        <dbReference type="EC" id="2.7.8.7"/>
    </reaction>
</comment>
<comment type="cofactor">
    <cofactor evidence="1">
        <name>Mg(2+)</name>
        <dbReference type="ChEBI" id="CHEBI:18420"/>
    </cofactor>
</comment>
<comment type="subcellular location">
    <subcellularLocation>
        <location evidence="1">Cytoplasm</location>
    </subcellularLocation>
</comment>
<comment type="similarity">
    <text evidence="1">Belongs to the P-Pant transferase superfamily. AcpS family.</text>
</comment>
<reference key="1">
    <citation type="submission" date="2008-06" db="EMBL/GenBank/DDBJ databases">
        <title>Complete sequence of Chloroherpeton thalassium ATCC 35110.</title>
        <authorList>
            <consortium name="US DOE Joint Genome Institute"/>
            <person name="Lucas S."/>
            <person name="Copeland A."/>
            <person name="Lapidus A."/>
            <person name="Glavina del Rio T."/>
            <person name="Dalin E."/>
            <person name="Tice H."/>
            <person name="Bruce D."/>
            <person name="Goodwin L."/>
            <person name="Pitluck S."/>
            <person name="Schmutz J."/>
            <person name="Larimer F."/>
            <person name="Land M."/>
            <person name="Hauser L."/>
            <person name="Kyrpides N."/>
            <person name="Mikhailova N."/>
            <person name="Liu Z."/>
            <person name="Li T."/>
            <person name="Zhao F."/>
            <person name="Overmann J."/>
            <person name="Bryant D.A."/>
            <person name="Richardson P."/>
        </authorList>
    </citation>
    <scope>NUCLEOTIDE SEQUENCE [LARGE SCALE GENOMIC DNA]</scope>
    <source>
        <strain>ATCC 35110 / GB-78</strain>
    </source>
</reference>
<accession>B3QTH9</accession>